<name>BLO20_PSEAI</name>
<comment type="function">
    <text>This is an oxacillin-hydrolyzing beta-lactamase.</text>
</comment>
<comment type="catalytic activity">
    <reaction evidence="3">
        <text>a beta-lactam + H2O = a substituted beta-amino acid</text>
        <dbReference type="Rhea" id="RHEA:20401"/>
        <dbReference type="ChEBI" id="CHEBI:15377"/>
        <dbReference type="ChEBI" id="CHEBI:35627"/>
        <dbReference type="ChEBI" id="CHEBI:140347"/>
        <dbReference type="EC" id="3.5.2.6"/>
    </reaction>
</comment>
<comment type="activity regulation">
    <text>Inhibited by clavulanic acid.</text>
</comment>
<comment type="similarity">
    <text evidence="4">Belongs to the class-D beta-lactamase family.</text>
</comment>
<protein>
    <recommendedName>
        <fullName>Beta-lactamase OXA-20</fullName>
        <ecNumber>3.5.2.6</ecNumber>
    </recommendedName>
    <alternativeName>
        <fullName>Penicillinase</fullName>
    </alternativeName>
</protein>
<accession>O84955</accession>
<proteinExistence type="inferred from homology"/>
<evidence type="ECO:0000250" key="1"/>
<evidence type="ECO:0000255" key="2"/>
<evidence type="ECO:0000255" key="3">
    <source>
        <dbReference type="PROSITE-ProRule" id="PRU10103"/>
    </source>
</evidence>
<evidence type="ECO:0000305" key="4"/>
<reference key="1">
    <citation type="journal article" date="1998" name="Antimicrob. Agents Chemother.">
        <title>Molecular characterization of OXA-20, a novel class D beta-lactamase, and its integron from Pseudomonas aeruginosa.</title>
        <authorList>
            <person name="Naas T."/>
            <person name="Sougakoff W."/>
            <person name="Casetta A."/>
            <person name="Nordmann P."/>
        </authorList>
    </citation>
    <scope>NUCLEOTIDE SEQUENCE [GENOMIC DNA]</scope>
    <source>
        <strain>Mus</strain>
    </source>
</reference>
<gene>
    <name type="primary">bla</name>
    <name type="synonym">oxa20</name>
</gene>
<feature type="signal peptide" evidence="2">
    <location>
        <begin position="1"/>
        <end position="21"/>
    </location>
</feature>
<feature type="chain" id="PRO_0000017034" description="Beta-lactamase OXA-20">
    <location>
        <begin position="22"/>
        <end position="266"/>
    </location>
</feature>
<feature type="active site" description="Acyl-ester intermediate" evidence="3">
    <location>
        <position position="72"/>
    </location>
</feature>
<feature type="binding site" evidence="1">
    <location>
        <begin position="210"/>
        <end position="212"/>
    </location>
    <ligand>
        <name>substrate</name>
    </ligand>
</feature>
<feature type="modified residue" description="N6-carboxylysine" evidence="1">
    <location>
        <position position="75"/>
    </location>
</feature>
<organism>
    <name type="scientific">Pseudomonas aeruginosa</name>
    <dbReference type="NCBI Taxonomy" id="287"/>
    <lineage>
        <taxon>Bacteria</taxon>
        <taxon>Pseudomonadati</taxon>
        <taxon>Pseudomonadota</taxon>
        <taxon>Gammaproteobacteria</taxon>
        <taxon>Pseudomonadales</taxon>
        <taxon>Pseudomonadaceae</taxon>
        <taxon>Pseudomonas</taxon>
    </lineage>
</organism>
<sequence>MIIRFLALLFSAVVLVSLGHAQEKTHESSNWGKYFSDFNAKGTIVVVDERTNGNSTSVYNESRAQQRYSPASTFKIPHTLFALDAGAVRDEFHVFRWDGAKRSFAGHNQDQNLRSAMRNSTVWVYQLFAKEIGENKARSYLEKLNYGNADPSTKSGDYWIDGNLAISANEQISILKKLYRNELPFRVEHQRLVKDLMIVEAKRDWILRAKTGWDGQMGWWVGWVEWPTGPVFFALNIDTPNRMEDLHKREAIARAILQSVNALPPN</sequence>
<keyword id="KW-0046">Antibiotic resistance</keyword>
<keyword id="KW-0378">Hydrolase</keyword>
<keyword id="KW-0732">Signal</keyword>
<dbReference type="EC" id="3.5.2.6"/>
<dbReference type="EMBL" id="AF024602">
    <property type="protein sequence ID" value="AAC23554.1"/>
    <property type="molecule type" value="Genomic_DNA"/>
</dbReference>
<dbReference type="SMR" id="O84955"/>
<dbReference type="CARD" id="ARO:3001415">
    <property type="molecule name" value="OXA-20"/>
    <property type="mechanism identifier" value="ARO:0001004"/>
    <property type="mechanism name" value="antibiotic inactivation"/>
</dbReference>
<dbReference type="KEGG" id="ag:AAC23554"/>
<dbReference type="GO" id="GO:0008800">
    <property type="term" value="F:beta-lactamase activity"/>
    <property type="evidence" value="ECO:0007669"/>
    <property type="project" value="UniProtKB-EC"/>
</dbReference>
<dbReference type="GO" id="GO:0008658">
    <property type="term" value="F:penicillin binding"/>
    <property type="evidence" value="ECO:0007669"/>
    <property type="project" value="InterPro"/>
</dbReference>
<dbReference type="GO" id="GO:0017001">
    <property type="term" value="P:antibiotic catabolic process"/>
    <property type="evidence" value="ECO:0007669"/>
    <property type="project" value="InterPro"/>
</dbReference>
<dbReference type="GO" id="GO:0046677">
    <property type="term" value="P:response to antibiotic"/>
    <property type="evidence" value="ECO:0007669"/>
    <property type="project" value="UniProtKB-KW"/>
</dbReference>
<dbReference type="Gene3D" id="3.40.710.10">
    <property type="entry name" value="DD-peptidase/beta-lactamase superfamily"/>
    <property type="match status" value="1"/>
</dbReference>
<dbReference type="InterPro" id="IPR012338">
    <property type="entry name" value="Beta-lactam/transpept-like"/>
</dbReference>
<dbReference type="InterPro" id="IPR002137">
    <property type="entry name" value="Beta-lactam_class-D_AS"/>
</dbReference>
<dbReference type="InterPro" id="IPR001460">
    <property type="entry name" value="PCN-bd_Tpept"/>
</dbReference>
<dbReference type="NCBIfam" id="NF012161">
    <property type="entry name" value="bla_class_D_main"/>
    <property type="match status" value="1"/>
</dbReference>
<dbReference type="Pfam" id="PF00905">
    <property type="entry name" value="Transpeptidase"/>
    <property type="match status" value="1"/>
</dbReference>
<dbReference type="SUPFAM" id="SSF56601">
    <property type="entry name" value="beta-lactamase/transpeptidase-like"/>
    <property type="match status" value="1"/>
</dbReference>
<dbReference type="PROSITE" id="PS00337">
    <property type="entry name" value="BETA_LACTAMASE_D"/>
    <property type="match status" value="1"/>
</dbReference>